<keyword id="KW-0963">Cytoplasm</keyword>
<keyword id="KW-0342">GTP-binding</keyword>
<keyword id="KW-0378">Hydrolase</keyword>
<keyword id="KW-0547">Nucleotide-binding</keyword>
<keyword id="KW-1185">Reference proteome</keyword>
<keyword id="KW-0687">Ribonucleoprotein</keyword>
<keyword id="KW-0694">RNA-binding</keyword>
<keyword id="KW-0733">Signal recognition particle</keyword>
<accession>Q18EV2</accession>
<sequence length="466" mass="50455">MVLDNLGSSLRGSLDKLQGKSRLDEDDVEEIVKEIQRSLLSADVEVSLVMELSSSIEDRATGEEPPAGTSARDHVLRIVYEELVDLVGDSTDLPLKSQTILLAGLQGSGKTTSAAKMAWWFSTKGLRPAVIQTDTFRPGAYDQAEQMCERAEVSFYGDPDCDDPVKIAREGIEATADADIHIVDTAGRHALEADLIDEIEAIDSTVAPDRSLLVLDAAIGQGAKQQAREFNNAIGIDGVVVTKLDGTAKGGGALTAVNETDSSIAFLGTGETVQDVERFEPNGFISRLLGMGDLKQLSERVERAMAETQEADDDWDPEDIMEGSFTLKDMRKQMEAMDRMGPLDQVMDMIPGLGGGLKDQLPDDAMDVTQNRMRDFDVIMDSMTEAELEDPRSVGASRVRRIARGSGTDEETVRELLQQHKMMERTIKQFQGMGEGDMQRMMKKMQQQGGGGMGGLGGGGGLGPFG</sequence>
<protein>
    <recommendedName>
        <fullName evidence="1">Signal recognition particle 54 kDa protein</fullName>
        <shortName evidence="1">SRP54</shortName>
        <ecNumber evidence="1">3.6.5.4</ecNumber>
    </recommendedName>
</protein>
<comment type="function">
    <text evidence="1">Involved in targeting and insertion of nascent membrane proteins into the cytoplasmic membrane. Binds to the hydrophobic signal sequence of the ribosome-nascent chain (RNC) as it emerges from the ribosomes. The SRP-RNC complex is then targeted to the cytoplasmic membrane where it interacts with the SRP receptor FtsY.</text>
</comment>
<comment type="catalytic activity">
    <reaction evidence="1">
        <text>GTP + H2O = GDP + phosphate + H(+)</text>
        <dbReference type="Rhea" id="RHEA:19669"/>
        <dbReference type="ChEBI" id="CHEBI:15377"/>
        <dbReference type="ChEBI" id="CHEBI:15378"/>
        <dbReference type="ChEBI" id="CHEBI:37565"/>
        <dbReference type="ChEBI" id="CHEBI:43474"/>
        <dbReference type="ChEBI" id="CHEBI:58189"/>
        <dbReference type="EC" id="3.6.5.4"/>
    </reaction>
</comment>
<comment type="subunit">
    <text evidence="1">Part of the signal recognition particle protein translocation system, which is composed of SRP and FtsY. Archaeal SRP consists of a 7S RNA molecule of 300 nucleotides and two protein subunits: SRP54 and SRP19.</text>
</comment>
<comment type="subcellular location">
    <subcellularLocation>
        <location evidence="1">Cytoplasm</location>
    </subcellularLocation>
    <text evidence="1">The SRP-RNC complex is targeted to the cytoplasmic membrane.</text>
</comment>
<comment type="domain">
    <text evidence="1">Composed of three domains: the N-terminal N domain, which is responsible for interactions with the ribosome, the central G domain, which binds GTP, and the C-terminal M domain, which binds the RNA and the signal sequence of the RNC.</text>
</comment>
<comment type="similarity">
    <text evidence="1">Belongs to the GTP-binding SRP family. SRP54 subfamily.</text>
</comment>
<gene>
    <name evidence="1" type="primary">srp54</name>
    <name type="ordered locus">HQ_3418A</name>
</gene>
<dbReference type="EC" id="3.6.5.4" evidence="1"/>
<dbReference type="EMBL" id="AM180088">
    <property type="protein sequence ID" value="CAJ53515.1"/>
    <property type="molecule type" value="Genomic_DNA"/>
</dbReference>
<dbReference type="RefSeq" id="WP_011572612.1">
    <property type="nucleotide sequence ID" value="NC_008212.1"/>
</dbReference>
<dbReference type="SMR" id="Q18EV2"/>
<dbReference type="STRING" id="362976.HQ_3418A"/>
<dbReference type="GeneID" id="4194714"/>
<dbReference type="KEGG" id="hwa:HQ_3418A"/>
<dbReference type="eggNOG" id="arCOG01228">
    <property type="taxonomic scope" value="Archaea"/>
</dbReference>
<dbReference type="HOGENOM" id="CLU_009301_6_0_2"/>
<dbReference type="Proteomes" id="UP000001975">
    <property type="component" value="Chromosome"/>
</dbReference>
<dbReference type="GO" id="GO:0048500">
    <property type="term" value="C:signal recognition particle"/>
    <property type="evidence" value="ECO:0007669"/>
    <property type="project" value="UniProtKB-UniRule"/>
</dbReference>
<dbReference type="GO" id="GO:0008312">
    <property type="term" value="F:7S RNA binding"/>
    <property type="evidence" value="ECO:0007669"/>
    <property type="project" value="UniProtKB-UniRule"/>
</dbReference>
<dbReference type="GO" id="GO:0016887">
    <property type="term" value="F:ATP hydrolysis activity"/>
    <property type="evidence" value="ECO:0007669"/>
    <property type="project" value="InterPro"/>
</dbReference>
<dbReference type="GO" id="GO:0005525">
    <property type="term" value="F:GTP binding"/>
    <property type="evidence" value="ECO:0007669"/>
    <property type="project" value="UniProtKB-UniRule"/>
</dbReference>
<dbReference type="GO" id="GO:0003924">
    <property type="term" value="F:GTPase activity"/>
    <property type="evidence" value="ECO:0007669"/>
    <property type="project" value="UniProtKB-UniRule"/>
</dbReference>
<dbReference type="GO" id="GO:0006614">
    <property type="term" value="P:SRP-dependent cotranslational protein targeting to membrane"/>
    <property type="evidence" value="ECO:0007669"/>
    <property type="project" value="InterPro"/>
</dbReference>
<dbReference type="CDD" id="cd17875">
    <property type="entry name" value="SRP54_G"/>
    <property type="match status" value="1"/>
</dbReference>
<dbReference type="Gene3D" id="3.40.50.300">
    <property type="entry name" value="P-loop containing nucleotide triphosphate hydrolases"/>
    <property type="match status" value="1"/>
</dbReference>
<dbReference type="Gene3D" id="1.20.120.140">
    <property type="entry name" value="Signal recognition particle SRP54, nucleotide-binding domain"/>
    <property type="match status" value="1"/>
</dbReference>
<dbReference type="Gene3D" id="1.10.260.30">
    <property type="entry name" value="Signal recognition particle, SRP54 subunit, M-domain"/>
    <property type="match status" value="1"/>
</dbReference>
<dbReference type="HAMAP" id="MF_00306">
    <property type="entry name" value="SRP54"/>
    <property type="match status" value="1"/>
</dbReference>
<dbReference type="InterPro" id="IPR003593">
    <property type="entry name" value="AAA+_ATPase"/>
</dbReference>
<dbReference type="InterPro" id="IPR027417">
    <property type="entry name" value="P-loop_NTPase"/>
</dbReference>
<dbReference type="InterPro" id="IPR036891">
    <property type="entry name" value="Signal_recog_part_SRP54_M_sf"/>
</dbReference>
<dbReference type="InterPro" id="IPR013822">
    <property type="entry name" value="Signal_recog_particl_SRP54_hlx"/>
</dbReference>
<dbReference type="InterPro" id="IPR004125">
    <property type="entry name" value="Signal_recog_particle_SRP54_M"/>
</dbReference>
<dbReference type="InterPro" id="IPR036225">
    <property type="entry name" value="SRP/SRP_N"/>
</dbReference>
<dbReference type="InterPro" id="IPR022941">
    <property type="entry name" value="SRP54"/>
</dbReference>
<dbReference type="InterPro" id="IPR000897">
    <property type="entry name" value="SRP54_GTPase_dom"/>
</dbReference>
<dbReference type="InterPro" id="IPR042101">
    <property type="entry name" value="SRP54_N_sf"/>
</dbReference>
<dbReference type="PANTHER" id="PTHR11564">
    <property type="entry name" value="SIGNAL RECOGNITION PARTICLE 54K PROTEIN SRP54"/>
    <property type="match status" value="1"/>
</dbReference>
<dbReference type="PANTHER" id="PTHR11564:SF5">
    <property type="entry name" value="SIGNAL RECOGNITION PARTICLE SUBUNIT SRP54"/>
    <property type="match status" value="1"/>
</dbReference>
<dbReference type="Pfam" id="PF00448">
    <property type="entry name" value="SRP54"/>
    <property type="match status" value="1"/>
</dbReference>
<dbReference type="Pfam" id="PF02881">
    <property type="entry name" value="SRP54_N"/>
    <property type="match status" value="1"/>
</dbReference>
<dbReference type="Pfam" id="PF02978">
    <property type="entry name" value="SRP_SPB"/>
    <property type="match status" value="1"/>
</dbReference>
<dbReference type="SMART" id="SM00382">
    <property type="entry name" value="AAA"/>
    <property type="match status" value="1"/>
</dbReference>
<dbReference type="SMART" id="SM00962">
    <property type="entry name" value="SRP54"/>
    <property type="match status" value="1"/>
</dbReference>
<dbReference type="SMART" id="SM00963">
    <property type="entry name" value="SRP54_N"/>
    <property type="match status" value="1"/>
</dbReference>
<dbReference type="SUPFAM" id="SSF47364">
    <property type="entry name" value="Domain of the SRP/SRP receptor G-proteins"/>
    <property type="match status" value="1"/>
</dbReference>
<dbReference type="SUPFAM" id="SSF52540">
    <property type="entry name" value="P-loop containing nucleoside triphosphate hydrolases"/>
    <property type="match status" value="1"/>
</dbReference>
<dbReference type="SUPFAM" id="SSF47446">
    <property type="entry name" value="Signal peptide-binding domain"/>
    <property type="match status" value="1"/>
</dbReference>
<feature type="chain" id="PRO_0000322241" description="Signal recognition particle 54 kDa protein">
    <location>
        <begin position="1"/>
        <end position="466"/>
    </location>
</feature>
<feature type="region of interest" description="Disordered" evidence="2">
    <location>
        <begin position="446"/>
        <end position="466"/>
    </location>
</feature>
<feature type="compositionally biased region" description="Gly residues" evidence="2">
    <location>
        <begin position="448"/>
        <end position="466"/>
    </location>
</feature>
<feature type="binding site" evidence="1">
    <location>
        <begin position="104"/>
        <end position="111"/>
    </location>
    <ligand>
        <name>GTP</name>
        <dbReference type="ChEBI" id="CHEBI:37565"/>
    </ligand>
</feature>
<feature type="binding site" evidence="1">
    <location>
        <begin position="184"/>
        <end position="188"/>
    </location>
    <ligand>
        <name>GTP</name>
        <dbReference type="ChEBI" id="CHEBI:37565"/>
    </ligand>
</feature>
<feature type="binding site" evidence="1">
    <location>
        <begin position="242"/>
        <end position="245"/>
    </location>
    <ligand>
        <name>GTP</name>
        <dbReference type="ChEBI" id="CHEBI:37565"/>
    </ligand>
</feature>
<organism>
    <name type="scientific">Haloquadratum walsbyi (strain DSM 16790 / HBSQ001)</name>
    <dbReference type="NCBI Taxonomy" id="362976"/>
    <lineage>
        <taxon>Archaea</taxon>
        <taxon>Methanobacteriati</taxon>
        <taxon>Methanobacteriota</taxon>
        <taxon>Stenosarchaea group</taxon>
        <taxon>Halobacteria</taxon>
        <taxon>Halobacteriales</taxon>
        <taxon>Haloferacaceae</taxon>
        <taxon>Haloquadratum</taxon>
    </lineage>
</organism>
<evidence type="ECO:0000255" key="1">
    <source>
        <dbReference type="HAMAP-Rule" id="MF_00306"/>
    </source>
</evidence>
<evidence type="ECO:0000256" key="2">
    <source>
        <dbReference type="SAM" id="MobiDB-lite"/>
    </source>
</evidence>
<reference key="1">
    <citation type="journal article" date="2006" name="BMC Genomics">
        <title>The genome of the square archaeon Haloquadratum walsbyi: life at the limits of water activity.</title>
        <authorList>
            <person name="Bolhuis H."/>
            <person name="Palm P."/>
            <person name="Wende A."/>
            <person name="Falb M."/>
            <person name="Rampp M."/>
            <person name="Rodriguez-Valera F."/>
            <person name="Pfeiffer F."/>
            <person name="Oesterhelt D."/>
        </authorList>
    </citation>
    <scope>NUCLEOTIDE SEQUENCE [LARGE SCALE GENOMIC DNA]</scope>
    <source>
        <strain>DSM 16790 / HBSQ001</strain>
    </source>
</reference>
<proteinExistence type="inferred from homology"/>
<name>SRP54_HALWD</name>